<feature type="chain" id="PRO_1000120133" description="Large ribosomal subunit protein bL32">
    <location>
        <begin position="1"/>
        <end position="57"/>
    </location>
</feature>
<feature type="region of interest" description="Disordered" evidence="2">
    <location>
        <begin position="1"/>
        <end position="37"/>
    </location>
</feature>
<accession>B5XXI1</accession>
<name>RL32_KLEP3</name>
<protein>
    <recommendedName>
        <fullName evidence="1">Large ribosomal subunit protein bL32</fullName>
    </recommendedName>
    <alternativeName>
        <fullName evidence="3">50S ribosomal protein L32</fullName>
    </alternativeName>
</protein>
<proteinExistence type="inferred from homology"/>
<dbReference type="EMBL" id="CP000964">
    <property type="protein sequence ID" value="ACI10634.1"/>
    <property type="molecule type" value="Genomic_DNA"/>
</dbReference>
<dbReference type="SMR" id="B5XXI1"/>
<dbReference type="KEGG" id="kpe:KPK_3469"/>
<dbReference type="HOGENOM" id="CLU_129084_2_1_6"/>
<dbReference type="Proteomes" id="UP000001734">
    <property type="component" value="Chromosome"/>
</dbReference>
<dbReference type="GO" id="GO:0015934">
    <property type="term" value="C:large ribosomal subunit"/>
    <property type="evidence" value="ECO:0007669"/>
    <property type="project" value="InterPro"/>
</dbReference>
<dbReference type="GO" id="GO:0003735">
    <property type="term" value="F:structural constituent of ribosome"/>
    <property type="evidence" value="ECO:0007669"/>
    <property type="project" value="InterPro"/>
</dbReference>
<dbReference type="GO" id="GO:0006412">
    <property type="term" value="P:translation"/>
    <property type="evidence" value="ECO:0007669"/>
    <property type="project" value="UniProtKB-UniRule"/>
</dbReference>
<dbReference type="HAMAP" id="MF_00340">
    <property type="entry name" value="Ribosomal_bL32"/>
    <property type="match status" value="1"/>
</dbReference>
<dbReference type="InterPro" id="IPR002677">
    <property type="entry name" value="Ribosomal_bL32"/>
</dbReference>
<dbReference type="InterPro" id="IPR044957">
    <property type="entry name" value="Ribosomal_bL32_bact"/>
</dbReference>
<dbReference type="InterPro" id="IPR011332">
    <property type="entry name" value="Ribosomal_zn-bd"/>
</dbReference>
<dbReference type="NCBIfam" id="TIGR01031">
    <property type="entry name" value="rpmF_bact"/>
    <property type="match status" value="1"/>
</dbReference>
<dbReference type="PANTHER" id="PTHR35534">
    <property type="entry name" value="50S RIBOSOMAL PROTEIN L32"/>
    <property type="match status" value="1"/>
</dbReference>
<dbReference type="PANTHER" id="PTHR35534:SF1">
    <property type="entry name" value="LARGE RIBOSOMAL SUBUNIT PROTEIN BL32"/>
    <property type="match status" value="1"/>
</dbReference>
<dbReference type="Pfam" id="PF01783">
    <property type="entry name" value="Ribosomal_L32p"/>
    <property type="match status" value="1"/>
</dbReference>
<dbReference type="SUPFAM" id="SSF57829">
    <property type="entry name" value="Zn-binding ribosomal proteins"/>
    <property type="match status" value="1"/>
</dbReference>
<sequence length="57" mass="6430">MAVQQNKPTRSKRGMRRSHDALTAVTSLSVDKTSGEKHLRHHITADGFYRGRKVIAK</sequence>
<comment type="similarity">
    <text evidence="1">Belongs to the bacterial ribosomal protein bL32 family.</text>
</comment>
<evidence type="ECO:0000255" key="1">
    <source>
        <dbReference type="HAMAP-Rule" id="MF_00340"/>
    </source>
</evidence>
<evidence type="ECO:0000256" key="2">
    <source>
        <dbReference type="SAM" id="MobiDB-lite"/>
    </source>
</evidence>
<evidence type="ECO:0000305" key="3"/>
<keyword id="KW-0687">Ribonucleoprotein</keyword>
<keyword id="KW-0689">Ribosomal protein</keyword>
<gene>
    <name evidence="1" type="primary">rpmF</name>
    <name type="ordered locus">KPK_3469</name>
</gene>
<reference key="1">
    <citation type="journal article" date="2008" name="PLoS Genet.">
        <title>Complete genome sequence of the N2-fixing broad host range endophyte Klebsiella pneumoniae 342 and virulence predictions verified in mice.</title>
        <authorList>
            <person name="Fouts D.E."/>
            <person name="Tyler H.L."/>
            <person name="DeBoy R.T."/>
            <person name="Daugherty S."/>
            <person name="Ren Q."/>
            <person name="Badger J.H."/>
            <person name="Durkin A.S."/>
            <person name="Huot H."/>
            <person name="Shrivastava S."/>
            <person name="Kothari S."/>
            <person name="Dodson R.J."/>
            <person name="Mohamoud Y."/>
            <person name="Khouri H."/>
            <person name="Roesch L.F.W."/>
            <person name="Krogfelt K.A."/>
            <person name="Struve C."/>
            <person name="Triplett E.W."/>
            <person name="Methe B.A."/>
        </authorList>
    </citation>
    <scope>NUCLEOTIDE SEQUENCE [LARGE SCALE GENOMIC DNA]</scope>
    <source>
        <strain>342</strain>
    </source>
</reference>
<organism>
    <name type="scientific">Klebsiella pneumoniae (strain 342)</name>
    <dbReference type="NCBI Taxonomy" id="507522"/>
    <lineage>
        <taxon>Bacteria</taxon>
        <taxon>Pseudomonadati</taxon>
        <taxon>Pseudomonadota</taxon>
        <taxon>Gammaproteobacteria</taxon>
        <taxon>Enterobacterales</taxon>
        <taxon>Enterobacteriaceae</taxon>
        <taxon>Klebsiella/Raoultella group</taxon>
        <taxon>Klebsiella</taxon>
        <taxon>Klebsiella pneumoniae complex</taxon>
    </lineage>
</organism>